<protein>
    <recommendedName>
        <fullName evidence="1">3-methyl-2-oxobutanoate hydroxymethyltransferase</fullName>
        <ecNumber evidence="1">2.1.2.11</ecNumber>
    </recommendedName>
    <alternativeName>
        <fullName evidence="1">Ketopantoate hydroxymethyltransferase</fullName>
        <shortName evidence="1">KPHMT</shortName>
    </alternativeName>
</protein>
<keyword id="KW-0963">Cytoplasm</keyword>
<keyword id="KW-0460">Magnesium</keyword>
<keyword id="KW-0479">Metal-binding</keyword>
<keyword id="KW-0566">Pantothenate biosynthesis</keyword>
<keyword id="KW-1185">Reference proteome</keyword>
<keyword id="KW-0808">Transferase</keyword>
<accession>Q9KUD0</accession>
<organism>
    <name type="scientific">Vibrio cholerae serotype O1 (strain ATCC 39315 / El Tor Inaba N16961)</name>
    <dbReference type="NCBI Taxonomy" id="243277"/>
    <lineage>
        <taxon>Bacteria</taxon>
        <taxon>Pseudomonadati</taxon>
        <taxon>Pseudomonadota</taxon>
        <taxon>Gammaproteobacteria</taxon>
        <taxon>Vibrionales</taxon>
        <taxon>Vibrionaceae</taxon>
        <taxon>Vibrio</taxon>
    </lineage>
</organism>
<dbReference type="EC" id="2.1.2.11" evidence="1"/>
<dbReference type="EMBL" id="AE003852">
    <property type="protein sequence ID" value="AAF93759.1"/>
    <property type="molecule type" value="Genomic_DNA"/>
</dbReference>
<dbReference type="PIR" id="A82304">
    <property type="entry name" value="A82304"/>
</dbReference>
<dbReference type="RefSeq" id="NP_230242.1">
    <property type="nucleotide sequence ID" value="NC_002505.1"/>
</dbReference>
<dbReference type="RefSeq" id="WP_000724415.1">
    <property type="nucleotide sequence ID" value="NZ_LT906614.1"/>
</dbReference>
<dbReference type="SMR" id="Q9KUD0"/>
<dbReference type="STRING" id="243277.VC_0592"/>
<dbReference type="DNASU" id="2615380"/>
<dbReference type="EnsemblBacteria" id="AAF93759">
    <property type="protein sequence ID" value="AAF93759"/>
    <property type="gene ID" value="VC_0592"/>
</dbReference>
<dbReference type="KEGG" id="vch:VC_0592"/>
<dbReference type="PATRIC" id="fig|243277.26.peg.564"/>
<dbReference type="eggNOG" id="COG0413">
    <property type="taxonomic scope" value="Bacteria"/>
</dbReference>
<dbReference type="HOGENOM" id="CLU_036645_1_0_6"/>
<dbReference type="UniPathway" id="UPA00028">
    <property type="reaction ID" value="UER00003"/>
</dbReference>
<dbReference type="Proteomes" id="UP000000584">
    <property type="component" value="Chromosome 1"/>
</dbReference>
<dbReference type="GO" id="GO:0005737">
    <property type="term" value="C:cytoplasm"/>
    <property type="evidence" value="ECO:0000318"/>
    <property type="project" value="GO_Central"/>
</dbReference>
<dbReference type="GO" id="GO:0003864">
    <property type="term" value="F:3-methyl-2-oxobutanoate hydroxymethyltransferase activity"/>
    <property type="evidence" value="ECO:0000318"/>
    <property type="project" value="GO_Central"/>
</dbReference>
<dbReference type="GO" id="GO:0000287">
    <property type="term" value="F:magnesium ion binding"/>
    <property type="evidence" value="ECO:0000318"/>
    <property type="project" value="GO_Central"/>
</dbReference>
<dbReference type="GO" id="GO:0015940">
    <property type="term" value="P:pantothenate biosynthetic process"/>
    <property type="evidence" value="ECO:0000318"/>
    <property type="project" value="GO_Central"/>
</dbReference>
<dbReference type="CDD" id="cd06557">
    <property type="entry name" value="KPHMT-like"/>
    <property type="match status" value="1"/>
</dbReference>
<dbReference type="FunFam" id="3.20.20.60:FF:000003">
    <property type="entry name" value="3-methyl-2-oxobutanoate hydroxymethyltransferase"/>
    <property type="match status" value="1"/>
</dbReference>
<dbReference type="Gene3D" id="3.20.20.60">
    <property type="entry name" value="Phosphoenolpyruvate-binding domains"/>
    <property type="match status" value="1"/>
</dbReference>
<dbReference type="HAMAP" id="MF_00156">
    <property type="entry name" value="PanB"/>
    <property type="match status" value="1"/>
</dbReference>
<dbReference type="InterPro" id="IPR003700">
    <property type="entry name" value="Pantoate_hydroxy_MeTrfase"/>
</dbReference>
<dbReference type="InterPro" id="IPR015813">
    <property type="entry name" value="Pyrv/PenolPyrv_kinase-like_dom"/>
</dbReference>
<dbReference type="InterPro" id="IPR040442">
    <property type="entry name" value="Pyrv_kinase-like_dom_sf"/>
</dbReference>
<dbReference type="NCBIfam" id="TIGR00222">
    <property type="entry name" value="panB"/>
    <property type="match status" value="1"/>
</dbReference>
<dbReference type="NCBIfam" id="NF001452">
    <property type="entry name" value="PRK00311.1"/>
    <property type="match status" value="1"/>
</dbReference>
<dbReference type="PANTHER" id="PTHR20881">
    <property type="entry name" value="3-METHYL-2-OXOBUTANOATE HYDROXYMETHYLTRANSFERASE"/>
    <property type="match status" value="1"/>
</dbReference>
<dbReference type="PANTHER" id="PTHR20881:SF0">
    <property type="entry name" value="3-METHYL-2-OXOBUTANOATE HYDROXYMETHYLTRANSFERASE"/>
    <property type="match status" value="1"/>
</dbReference>
<dbReference type="Pfam" id="PF02548">
    <property type="entry name" value="Pantoate_transf"/>
    <property type="match status" value="1"/>
</dbReference>
<dbReference type="PIRSF" id="PIRSF000388">
    <property type="entry name" value="Pantoate_hydroxy_MeTrfase"/>
    <property type="match status" value="1"/>
</dbReference>
<dbReference type="SUPFAM" id="SSF51621">
    <property type="entry name" value="Phosphoenolpyruvate/pyruvate domain"/>
    <property type="match status" value="1"/>
</dbReference>
<proteinExistence type="inferred from homology"/>
<feature type="chain" id="PRO_0000184903" description="3-methyl-2-oxobutanoate hydroxymethyltransferase">
    <location>
        <begin position="1"/>
        <end position="264"/>
    </location>
</feature>
<feature type="active site" description="Proton acceptor" evidence="1">
    <location>
        <position position="181"/>
    </location>
</feature>
<feature type="binding site" evidence="1">
    <location>
        <begin position="45"/>
        <end position="46"/>
    </location>
    <ligand>
        <name>3-methyl-2-oxobutanoate</name>
        <dbReference type="ChEBI" id="CHEBI:11851"/>
    </ligand>
</feature>
<feature type="binding site" evidence="1">
    <location>
        <position position="45"/>
    </location>
    <ligand>
        <name>Mg(2+)</name>
        <dbReference type="ChEBI" id="CHEBI:18420"/>
    </ligand>
</feature>
<feature type="binding site" evidence="1">
    <location>
        <position position="84"/>
    </location>
    <ligand>
        <name>3-methyl-2-oxobutanoate</name>
        <dbReference type="ChEBI" id="CHEBI:11851"/>
    </ligand>
</feature>
<feature type="binding site" evidence="1">
    <location>
        <position position="84"/>
    </location>
    <ligand>
        <name>Mg(2+)</name>
        <dbReference type="ChEBI" id="CHEBI:18420"/>
    </ligand>
</feature>
<feature type="binding site" evidence="1">
    <location>
        <position position="112"/>
    </location>
    <ligand>
        <name>3-methyl-2-oxobutanoate</name>
        <dbReference type="ChEBI" id="CHEBI:11851"/>
    </ligand>
</feature>
<feature type="binding site" evidence="1">
    <location>
        <position position="114"/>
    </location>
    <ligand>
        <name>Mg(2+)</name>
        <dbReference type="ChEBI" id="CHEBI:18420"/>
    </ligand>
</feature>
<sequence length="264" mass="28659">MKKITINDLMKWKQEGRKFATSTAYDASFAQLFESQEMPVLLVGDSLGMVLQGETDTLPVTVDDIAYHTRCVRKGSPNCLLMADMPFMSYATPEQACENAAKLVRAGANMVKIEGGDWLVDTVKMLTERAVPVCAHLGLTPQSVNIFGGYKVQGREQDKADRMVRDALALQEAGAQIVLLECVPAELANRITQILDVPVIGIGAGNGTDGQILVMHDMFGISANYMPKFSKNFLAETGDIRQAVAKYIEDVASGAFPDLAHTIA</sequence>
<reference key="1">
    <citation type="journal article" date="2000" name="Nature">
        <title>DNA sequence of both chromosomes of the cholera pathogen Vibrio cholerae.</title>
        <authorList>
            <person name="Heidelberg J.F."/>
            <person name="Eisen J.A."/>
            <person name="Nelson W.C."/>
            <person name="Clayton R.A."/>
            <person name="Gwinn M.L."/>
            <person name="Dodson R.J."/>
            <person name="Haft D.H."/>
            <person name="Hickey E.K."/>
            <person name="Peterson J.D."/>
            <person name="Umayam L.A."/>
            <person name="Gill S.R."/>
            <person name="Nelson K.E."/>
            <person name="Read T.D."/>
            <person name="Tettelin H."/>
            <person name="Richardson D.L."/>
            <person name="Ermolaeva M.D."/>
            <person name="Vamathevan J.J."/>
            <person name="Bass S."/>
            <person name="Qin H."/>
            <person name="Dragoi I."/>
            <person name="Sellers P."/>
            <person name="McDonald L.A."/>
            <person name="Utterback T.R."/>
            <person name="Fleischmann R.D."/>
            <person name="Nierman W.C."/>
            <person name="White O."/>
            <person name="Salzberg S.L."/>
            <person name="Smith H.O."/>
            <person name="Colwell R.R."/>
            <person name="Mekalanos J.J."/>
            <person name="Venter J.C."/>
            <person name="Fraser C.M."/>
        </authorList>
    </citation>
    <scope>NUCLEOTIDE SEQUENCE [LARGE SCALE GENOMIC DNA]</scope>
    <source>
        <strain>ATCC 39315 / El Tor Inaba N16961</strain>
    </source>
</reference>
<name>PANB_VIBCH</name>
<gene>
    <name evidence="1" type="primary">panB</name>
    <name type="ordered locus">VC_0592</name>
</gene>
<evidence type="ECO:0000255" key="1">
    <source>
        <dbReference type="HAMAP-Rule" id="MF_00156"/>
    </source>
</evidence>
<comment type="function">
    <text evidence="1">Catalyzes the reversible reaction in which hydroxymethyl group from 5,10-methylenetetrahydrofolate is transferred onto alpha-ketoisovalerate to form ketopantoate.</text>
</comment>
<comment type="catalytic activity">
    <reaction evidence="1">
        <text>3-methyl-2-oxobutanoate + (6R)-5,10-methylene-5,6,7,8-tetrahydrofolate + H2O = 2-dehydropantoate + (6S)-5,6,7,8-tetrahydrofolate</text>
        <dbReference type="Rhea" id="RHEA:11824"/>
        <dbReference type="ChEBI" id="CHEBI:11561"/>
        <dbReference type="ChEBI" id="CHEBI:11851"/>
        <dbReference type="ChEBI" id="CHEBI:15377"/>
        <dbReference type="ChEBI" id="CHEBI:15636"/>
        <dbReference type="ChEBI" id="CHEBI:57453"/>
        <dbReference type="EC" id="2.1.2.11"/>
    </reaction>
</comment>
<comment type="cofactor">
    <cofactor evidence="1">
        <name>Mg(2+)</name>
        <dbReference type="ChEBI" id="CHEBI:18420"/>
    </cofactor>
    <text evidence="1">Binds 1 Mg(2+) ion per subunit.</text>
</comment>
<comment type="pathway">
    <text evidence="1">Cofactor biosynthesis; (R)-pantothenate biosynthesis; (R)-pantoate from 3-methyl-2-oxobutanoate: step 1/2.</text>
</comment>
<comment type="subunit">
    <text evidence="1">Homodecamer; pentamer of dimers.</text>
</comment>
<comment type="subcellular location">
    <subcellularLocation>
        <location evidence="1">Cytoplasm</location>
    </subcellularLocation>
</comment>
<comment type="similarity">
    <text evidence="1">Belongs to the PanB family.</text>
</comment>